<gene>
    <name type="primary">DidioMp35</name>
    <name type="ORF">DDB_G0294056</name>
</gene>
<comment type="subcellular location">
    <subcellularLocation>
        <location evidence="4">Mitochondrion membrane</location>
        <topology evidence="1">Single-pass membrane protein</topology>
    </subcellularLocation>
</comment>
<comment type="miscellaneous">
    <text>Found in a 14.5 kb cluster region located downstream from rpl11 gene and upstream of orf796.</text>
</comment>
<comment type="caution">
    <text evidence="4">Some authors (PubMed:9560439, PubMed:10821186) suggest this protein is rps11, however rps11 is a completely different gene which encodes small ribosomal subunit protein uS11.</text>
</comment>
<reference key="1">
    <citation type="journal article" date="2000" name="Mol. Gen. Genet.">
        <title>The mitochondrial DNA of Dictyostelium discoideum: complete sequence, gene content and genome organization.</title>
        <authorList>
            <person name="Ogawa S."/>
            <person name="Yoshino R."/>
            <person name="Angata K."/>
            <person name="Iwamoto M."/>
            <person name="Pi M."/>
            <person name="Kuroe K."/>
            <person name="Matsuo K."/>
            <person name="Morio T."/>
            <person name="Urushihara H."/>
            <person name="Yanagisawa K."/>
            <person name="Tanaka Y."/>
        </authorList>
    </citation>
    <scope>NUCLEOTIDE SEQUENCE [LARGE SCALE GENOMIC DNA]</scope>
    <source>
        <strain>AX3</strain>
    </source>
</reference>
<reference key="2">
    <citation type="journal article" date="1998" name="Curr. Genet.">
        <title>A ribosomal protein gene cluster is encoded in the mitochondrial DNA of Dictyostelium discoideum: UGA termination codons and similarity of gene order to Acanthamoeba castellanii.</title>
        <authorList>
            <person name="Iwamoto M."/>
            <person name="Pi M."/>
            <person name="Kurihara M."/>
            <person name="Morio T."/>
            <person name="Tanaka Y."/>
        </authorList>
    </citation>
    <scope>IDENTIFICATION</scope>
</reference>
<organism>
    <name type="scientific">Dictyostelium discoideum</name>
    <name type="common">Social amoeba</name>
    <dbReference type="NCBI Taxonomy" id="44689"/>
    <lineage>
        <taxon>Eukaryota</taxon>
        <taxon>Amoebozoa</taxon>
        <taxon>Evosea</taxon>
        <taxon>Eumycetozoa</taxon>
        <taxon>Dictyostelia</taxon>
        <taxon>Dictyosteliales</taxon>
        <taxon>Dictyosteliaceae</taxon>
        <taxon>Dictyostelium</taxon>
    </lineage>
</organism>
<evidence type="ECO:0000255" key="1"/>
<evidence type="ECO:0000303" key="2">
    <source>
    </source>
</evidence>
<evidence type="ECO:0000303" key="3">
    <source>
    </source>
</evidence>
<evidence type="ECO:0000305" key="4"/>
<dbReference type="EMBL" id="D63523">
    <property type="protein sequence ID" value="BAA23576.1"/>
    <property type="molecule type" value="Genomic_DNA"/>
</dbReference>
<dbReference type="EMBL" id="AB000109">
    <property type="protein sequence ID" value="BAA78084.1"/>
    <property type="molecule type" value="Genomic_DNA"/>
</dbReference>
<dbReference type="PIR" id="T43781">
    <property type="entry name" value="T43781"/>
</dbReference>
<dbReference type="STRING" id="44689.O21039"/>
<dbReference type="KEGG" id="ddi:DidioMp35"/>
<dbReference type="dictyBase" id="DDB_G0294056">
    <property type="gene designation" value="DidioMp35"/>
</dbReference>
<dbReference type="VEuPathDB" id="AmoebaDB:DidioMp35"/>
<dbReference type="InParanoid" id="O21039"/>
<dbReference type="PRO" id="PR:O21039"/>
<dbReference type="Proteomes" id="UP000002195">
    <property type="component" value="Mitochondrion"/>
</dbReference>
<dbReference type="GO" id="GO:0031966">
    <property type="term" value="C:mitochondrial membrane"/>
    <property type="evidence" value="ECO:0007669"/>
    <property type="project" value="UniProtKB-SubCell"/>
</dbReference>
<dbReference type="GO" id="GO:0005739">
    <property type="term" value="C:mitochondrion"/>
    <property type="evidence" value="ECO:0000314"/>
    <property type="project" value="dictyBase"/>
</dbReference>
<name>MP35_DICDI</name>
<keyword id="KW-0472">Membrane</keyword>
<keyword id="KW-0496">Mitochondrion</keyword>
<keyword id="KW-1185">Reference proteome</keyword>
<keyword id="KW-0812">Transmembrane</keyword>
<keyword id="KW-1133">Transmembrane helix</keyword>
<feature type="chain" id="PRO_0000376011" description="Uncharacterized mitochondrial protein 35">
    <location>
        <begin position="1"/>
        <end position="127"/>
    </location>
</feature>
<feature type="transmembrane region" description="Helical" evidence="1">
    <location>
        <begin position="85"/>
        <end position="107"/>
    </location>
</feature>
<protein>
    <recommendedName>
        <fullName evidence="4">Uncharacterized mitochondrial protein 35</fullName>
    </recommendedName>
    <alternativeName>
        <fullName evidence="3">ORF127</fullName>
    </alternativeName>
    <alternativeName>
        <fullName evidence="2">Ribosomal protein S11</fullName>
    </alternativeName>
</protein>
<accession>O21039</accession>
<sequence length="127" mass="15639">MQNKKIAHIVRIEMFEEKIDRLDLIFTKYVEYKFPLYLLGKLWLYKFIRRKFNLIGPLNEQILSPYLQFNLYFDKSKARKETFKVYLGKIGFVLLHVFYLSCIAYYDSFLYAKVMNDWLEEVMRTRY</sequence>
<geneLocation type="mitochondrion"/>
<proteinExistence type="inferred from homology"/>